<dbReference type="EMBL" id="AE008384">
    <property type="protein sequence ID" value="AAM30339.1"/>
    <property type="molecule type" value="Genomic_DNA"/>
</dbReference>
<dbReference type="RefSeq" id="WP_011032594.1">
    <property type="nucleotide sequence ID" value="NC_003901.1"/>
</dbReference>
<dbReference type="KEGG" id="mma:MM_0643"/>
<dbReference type="PATRIC" id="fig|192952.21.peg.761"/>
<dbReference type="eggNOG" id="arCOG04898">
    <property type="taxonomic scope" value="Archaea"/>
</dbReference>
<dbReference type="HOGENOM" id="CLU_096410_3_0_2"/>
<dbReference type="Proteomes" id="UP000000595">
    <property type="component" value="Chromosome"/>
</dbReference>
<dbReference type="GO" id="GO:0005886">
    <property type="term" value="C:plasma membrane"/>
    <property type="evidence" value="ECO:0007669"/>
    <property type="project" value="UniProtKB-SubCell"/>
</dbReference>
<dbReference type="GO" id="GO:0005384">
    <property type="term" value="F:manganese ion transmembrane transporter activity"/>
    <property type="evidence" value="ECO:0007669"/>
    <property type="project" value="UniProtKB-UniRule"/>
</dbReference>
<dbReference type="HAMAP" id="MF_01521">
    <property type="entry name" value="MntP_pump"/>
    <property type="match status" value="1"/>
</dbReference>
<dbReference type="InterPro" id="IPR003810">
    <property type="entry name" value="Mntp/YtaF"/>
</dbReference>
<dbReference type="InterPro" id="IPR022929">
    <property type="entry name" value="Put_MntP"/>
</dbReference>
<dbReference type="PANTHER" id="PTHR35529">
    <property type="entry name" value="MANGANESE EFFLUX PUMP MNTP-RELATED"/>
    <property type="match status" value="1"/>
</dbReference>
<dbReference type="PANTHER" id="PTHR35529:SF1">
    <property type="entry name" value="MANGANESE EFFLUX PUMP MNTP-RELATED"/>
    <property type="match status" value="1"/>
</dbReference>
<dbReference type="Pfam" id="PF02659">
    <property type="entry name" value="Mntp"/>
    <property type="match status" value="1"/>
</dbReference>
<evidence type="ECO:0000255" key="1">
    <source>
        <dbReference type="HAMAP-Rule" id="MF_01521"/>
    </source>
</evidence>
<comment type="function">
    <text evidence="1">Probably functions as a manganese efflux pump.</text>
</comment>
<comment type="subcellular location">
    <subcellularLocation>
        <location evidence="1">Cell membrane</location>
        <topology evidence="1">Multi-pass membrane protein</topology>
    </subcellularLocation>
</comment>
<comment type="similarity">
    <text evidence="1">Belongs to the MntP (TC 9.B.29) family.</text>
</comment>
<protein>
    <recommendedName>
        <fullName evidence="1">Putative manganese efflux pump MntP</fullName>
    </recommendedName>
</protein>
<sequence length="186" mass="19724">MSFLTNFLLGLGLAMDAFAVSMSSGTTVRPFKVSDALKLAVFFGGFQALMPVLGWVGGSAVSGFVSDYAPWIAFGLLAFIGGKMIYEALYGDPDGKVNSLNYSMLFLLAVATSIDALAVGISFAFLGTPILEPVIIIGCVTFVMSFCGAVLGYRIGHFFENEVEILGGLILIGLGVKILAEHMDWI</sequence>
<organism>
    <name type="scientific">Methanosarcina mazei (strain ATCC BAA-159 / DSM 3647 / Goe1 / Go1 / JCM 11833 / OCM 88)</name>
    <name type="common">Methanosarcina frisia</name>
    <dbReference type="NCBI Taxonomy" id="192952"/>
    <lineage>
        <taxon>Archaea</taxon>
        <taxon>Methanobacteriati</taxon>
        <taxon>Methanobacteriota</taxon>
        <taxon>Stenosarchaea group</taxon>
        <taxon>Methanomicrobia</taxon>
        <taxon>Methanosarcinales</taxon>
        <taxon>Methanosarcinaceae</taxon>
        <taxon>Methanosarcina</taxon>
    </lineage>
</organism>
<feature type="chain" id="PRO_0000155678" description="Putative manganese efflux pump MntP">
    <location>
        <begin position="1"/>
        <end position="186"/>
    </location>
</feature>
<feature type="transmembrane region" description="Helical" evidence="1">
    <location>
        <begin position="1"/>
        <end position="21"/>
    </location>
</feature>
<feature type="transmembrane region" description="Helical" evidence="1">
    <location>
        <begin position="41"/>
        <end position="61"/>
    </location>
</feature>
<feature type="transmembrane region" description="Helical" evidence="1">
    <location>
        <begin position="62"/>
        <end position="82"/>
    </location>
</feature>
<feature type="transmembrane region" description="Helical" evidence="1">
    <location>
        <begin position="105"/>
        <end position="127"/>
    </location>
</feature>
<feature type="transmembrane region" description="Helical" evidence="1">
    <location>
        <begin position="139"/>
        <end position="159"/>
    </location>
</feature>
<feature type="transmembrane region" description="Helical" evidence="1">
    <location>
        <begin position="163"/>
        <end position="183"/>
    </location>
</feature>
<keyword id="KW-1003">Cell membrane</keyword>
<keyword id="KW-0406">Ion transport</keyword>
<keyword id="KW-0464">Manganese</keyword>
<keyword id="KW-0472">Membrane</keyword>
<keyword id="KW-0812">Transmembrane</keyword>
<keyword id="KW-1133">Transmembrane helix</keyword>
<keyword id="KW-0813">Transport</keyword>
<reference key="1">
    <citation type="journal article" date="2002" name="J. Mol. Microbiol. Biotechnol.">
        <title>The genome of Methanosarcina mazei: evidence for lateral gene transfer between Bacteria and Archaea.</title>
        <authorList>
            <person name="Deppenmeier U."/>
            <person name="Johann A."/>
            <person name="Hartsch T."/>
            <person name="Merkl R."/>
            <person name="Schmitz R.A."/>
            <person name="Martinez-Arias R."/>
            <person name="Henne A."/>
            <person name="Wiezer A."/>
            <person name="Baeumer S."/>
            <person name="Jacobi C."/>
            <person name="Brueggemann H."/>
            <person name="Lienard T."/>
            <person name="Christmann A."/>
            <person name="Boemecke M."/>
            <person name="Steckel S."/>
            <person name="Bhattacharyya A."/>
            <person name="Lykidis A."/>
            <person name="Overbeek R."/>
            <person name="Klenk H.-P."/>
            <person name="Gunsalus R.P."/>
            <person name="Fritz H.-J."/>
            <person name="Gottschalk G."/>
        </authorList>
    </citation>
    <scope>NUCLEOTIDE SEQUENCE [LARGE SCALE GENOMIC DNA]</scope>
    <source>
        <strain>ATCC BAA-159 / DSM 3647 / Goe1 / Go1 / JCM 11833 / OCM 88</strain>
    </source>
</reference>
<gene>
    <name evidence="1" type="primary">mntP</name>
    <name type="ordered locus">MM_0643</name>
</gene>
<accession>Q8PZ51</accession>
<proteinExistence type="inferred from homology"/>
<name>MNTP_METMA</name>